<sequence>MGKLTLLLLAILVWLQYSLWFGKNGIHDYTRVNDDVAAQQATNAKLKARNDQLFAEIDDLNGGQEALEERARNELSMTRPGETFYRLVPDASKRAQSAGQNNR</sequence>
<keyword id="KW-0131">Cell cycle</keyword>
<keyword id="KW-0132">Cell division</keyword>
<keyword id="KW-0997">Cell inner membrane</keyword>
<keyword id="KW-1003">Cell membrane</keyword>
<keyword id="KW-0175">Coiled coil</keyword>
<keyword id="KW-0472">Membrane</keyword>
<keyword id="KW-1185">Reference proteome</keyword>
<keyword id="KW-0812">Transmembrane</keyword>
<keyword id="KW-1133">Transmembrane helix</keyword>
<evidence type="ECO:0000255" key="1">
    <source>
        <dbReference type="HAMAP-Rule" id="MF_00599"/>
    </source>
</evidence>
<organism>
    <name type="scientific">Shigella sonnei (strain Ss046)</name>
    <dbReference type="NCBI Taxonomy" id="300269"/>
    <lineage>
        <taxon>Bacteria</taxon>
        <taxon>Pseudomonadati</taxon>
        <taxon>Pseudomonadota</taxon>
        <taxon>Gammaproteobacteria</taxon>
        <taxon>Enterobacterales</taxon>
        <taxon>Enterobacteriaceae</taxon>
        <taxon>Shigella</taxon>
    </lineage>
</organism>
<feature type="chain" id="PRO_1000025731" description="Cell division protein FtsB">
    <location>
        <begin position="1"/>
        <end position="103"/>
    </location>
</feature>
<feature type="topological domain" description="Cytoplasmic" evidence="1">
    <location>
        <begin position="1"/>
        <end position="3"/>
    </location>
</feature>
<feature type="transmembrane region" description="Helical" evidence="1">
    <location>
        <begin position="4"/>
        <end position="21"/>
    </location>
</feature>
<feature type="topological domain" description="Periplasmic" evidence="1">
    <location>
        <begin position="22"/>
        <end position="103"/>
    </location>
</feature>
<feature type="coiled-coil region" evidence="1">
    <location>
        <begin position="31"/>
        <end position="71"/>
    </location>
</feature>
<gene>
    <name evidence="1" type="primary">ftsB</name>
    <name type="ordered locus">SSON_2896</name>
</gene>
<proteinExistence type="inferred from homology"/>
<name>FTSB_SHISS</name>
<accession>Q3YYB4</accession>
<reference key="1">
    <citation type="journal article" date="2005" name="Nucleic Acids Res.">
        <title>Genome dynamics and diversity of Shigella species, the etiologic agents of bacillary dysentery.</title>
        <authorList>
            <person name="Yang F."/>
            <person name="Yang J."/>
            <person name="Zhang X."/>
            <person name="Chen L."/>
            <person name="Jiang Y."/>
            <person name="Yan Y."/>
            <person name="Tang X."/>
            <person name="Wang J."/>
            <person name="Xiong Z."/>
            <person name="Dong J."/>
            <person name="Xue Y."/>
            <person name="Zhu Y."/>
            <person name="Xu X."/>
            <person name="Sun L."/>
            <person name="Chen S."/>
            <person name="Nie H."/>
            <person name="Peng J."/>
            <person name="Xu J."/>
            <person name="Wang Y."/>
            <person name="Yuan Z."/>
            <person name="Wen Y."/>
            <person name="Yao Z."/>
            <person name="Shen Y."/>
            <person name="Qiang B."/>
            <person name="Hou Y."/>
            <person name="Yu J."/>
            <person name="Jin Q."/>
        </authorList>
    </citation>
    <scope>NUCLEOTIDE SEQUENCE [LARGE SCALE GENOMIC DNA]</scope>
    <source>
        <strain>Ss046</strain>
    </source>
</reference>
<comment type="function">
    <text evidence="1">Essential cell division protein. May link together the upstream cell division proteins, which are predominantly cytoplasmic, with the downstream cell division proteins, which are predominantly periplasmic.</text>
</comment>
<comment type="subunit">
    <text evidence="1">Part of a complex composed of FtsB, FtsL and FtsQ.</text>
</comment>
<comment type="subcellular location">
    <subcellularLocation>
        <location evidence="1">Cell inner membrane</location>
        <topology evidence="1">Single-pass type II membrane protein</topology>
    </subcellularLocation>
    <text evidence="1">Localizes to the division septum.</text>
</comment>
<comment type="similarity">
    <text evidence="1">Belongs to the FtsB family.</text>
</comment>
<protein>
    <recommendedName>
        <fullName evidence="1">Cell division protein FtsB</fullName>
    </recommendedName>
</protein>
<dbReference type="EMBL" id="CP000038">
    <property type="protein sequence ID" value="AAZ89498.1"/>
    <property type="molecule type" value="Genomic_DNA"/>
</dbReference>
<dbReference type="RefSeq" id="WP_000517476.1">
    <property type="nucleotide sequence ID" value="NC_007384.1"/>
</dbReference>
<dbReference type="SMR" id="Q3YYB4"/>
<dbReference type="GeneID" id="93779258"/>
<dbReference type="KEGG" id="ssn:SSON_2896"/>
<dbReference type="HOGENOM" id="CLU_134863_5_2_6"/>
<dbReference type="Proteomes" id="UP000002529">
    <property type="component" value="Chromosome"/>
</dbReference>
<dbReference type="GO" id="GO:0032153">
    <property type="term" value="C:cell division site"/>
    <property type="evidence" value="ECO:0007669"/>
    <property type="project" value="UniProtKB-UniRule"/>
</dbReference>
<dbReference type="GO" id="GO:0030428">
    <property type="term" value="C:cell septum"/>
    <property type="evidence" value="ECO:0007669"/>
    <property type="project" value="TreeGrafter"/>
</dbReference>
<dbReference type="GO" id="GO:0005886">
    <property type="term" value="C:plasma membrane"/>
    <property type="evidence" value="ECO:0007669"/>
    <property type="project" value="UniProtKB-SubCell"/>
</dbReference>
<dbReference type="GO" id="GO:0043093">
    <property type="term" value="P:FtsZ-dependent cytokinesis"/>
    <property type="evidence" value="ECO:0007669"/>
    <property type="project" value="UniProtKB-UniRule"/>
</dbReference>
<dbReference type="FunFam" id="1.20.5.400:FF:000001">
    <property type="entry name" value="Cell division protein FtsB"/>
    <property type="match status" value="1"/>
</dbReference>
<dbReference type="Gene3D" id="1.20.5.400">
    <property type="match status" value="1"/>
</dbReference>
<dbReference type="HAMAP" id="MF_00599">
    <property type="entry name" value="FtsB"/>
    <property type="match status" value="1"/>
</dbReference>
<dbReference type="InterPro" id="IPR023081">
    <property type="entry name" value="Cell_div_FtsB"/>
</dbReference>
<dbReference type="InterPro" id="IPR007060">
    <property type="entry name" value="FtsL/DivIC"/>
</dbReference>
<dbReference type="NCBIfam" id="NF002058">
    <property type="entry name" value="PRK00888.1"/>
    <property type="match status" value="1"/>
</dbReference>
<dbReference type="PANTHER" id="PTHR37485">
    <property type="entry name" value="CELL DIVISION PROTEIN FTSB"/>
    <property type="match status" value="1"/>
</dbReference>
<dbReference type="PANTHER" id="PTHR37485:SF1">
    <property type="entry name" value="CELL DIVISION PROTEIN FTSB"/>
    <property type="match status" value="1"/>
</dbReference>
<dbReference type="Pfam" id="PF04977">
    <property type="entry name" value="DivIC"/>
    <property type="match status" value="1"/>
</dbReference>